<name>CLPP2_BRADU</name>
<proteinExistence type="inferred from homology"/>
<evidence type="ECO:0000255" key="1">
    <source>
        <dbReference type="HAMAP-Rule" id="MF_00444"/>
    </source>
</evidence>
<reference key="1">
    <citation type="journal article" date="2002" name="DNA Res.">
        <title>Complete genomic sequence of nitrogen-fixing symbiotic bacterium Bradyrhizobium japonicum USDA110.</title>
        <authorList>
            <person name="Kaneko T."/>
            <person name="Nakamura Y."/>
            <person name="Sato S."/>
            <person name="Minamisawa K."/>
            <person name="Uchiumi T."/>
            <person name="Sasamoto S."/>
            <person name="Watanabe A."/>
            <person name="Idesawa K."/>
            <person name="Iriguchi M."/>
            <person name="Kawashima K."/>
            <person name="Kohara M."/>
            <person name="Matsumoto M."/>
            <person name="Shimpo S."/>
            <person name="Tsuruoka H."/>
            <person name="Wada T."/>
            <person name="Yamada M."/>
            <person name="Tabata S."/>
        </authorList>
    </citation>
    <scope>NUCLEOTIDE SEQUENCE [LARGE SCALE GENOMIC DNA]</scope>
    <source>
        <strain>JCM 10833 / BCRC 13528 / IAM 13628 / NBRC 14792 / USDA 110</strain>
    </source>
</reference>
<comment type="function">
    <text evidence="1">Cleaves peptides in various proteins in a process that requires ATP hydrolysis. Has a chymotrypsin-like activity. Plays a major role in the degradation of misfolded proteins.</text>
</comment>
<comment type="catalytic activity">
    <reaction evidence="1">
        <text>Hydrolysis of proteins to small peptides in the presence of ATP and magnesium. alpha-casein is the usual test substrate. In the absence of ATP, only oligopeptides shorter than five residues are hydrolyzed (such as succinyl-Leu-Tyr-|-NHMec, and Leu-Tyr-Leu-|-Tyr-Trp, in which cleavage of the -Tyr-|-Leu- and -Tyr-|-Trp bonds also occurs).</text>
        <dbReference type="EC" id="3.4.21.92"/>
    </reaction>
</comment>
<comment type="subunit">
    <text evidence="1">Fourteen ClpP subunits assemble into 2 heptameric rings which stack back to back to give a disk-like structure with a central cavity, resembling the structure of eukaryotic proteasomes.</text>
</comment>
<comment type="subcellular location">
    <subcellularLocation>
        <location evidence="1">Cytoplasm</location>
    </subcellularLocation>
</comment>
<comment type="similarity">
    <text evidence="1">Belongs to the peptidase S14 family.</text>
</comment>
<keyword id="KW-0963">Cytoplasm</keyword>
<keyword id="KW-0378">Hydrolase</keyword>
<keyword id="KW-0645">Protease</keyword>
<keyword id="KW-1185">Reference proteome</keyword>
<keyword id="KW-0720">Serine protease</keyword>
<protein>
    <recommendedName>
        <fullName evidence="1">ATP-dependent Clp protease proteolytic subunit 2</fullName>
        <ecNumber evidence="1">3.4.21.92</ecNumber>
    </recommendedName>
    <alternativeName>
        <fullName evidence="1">Endopeptidase Clp 2</fullName>
    </alternativeName>
</protein>
<gene>
    <name evidence="1" type="primary">clpP2</name>
    <name type="ordered locus">bll4944</name>
</gene>
<feature type="chain" id="PRO_0000179515" description="ATP-dependent Clp protease proteolytic subunit 2">
    <location>
        <begin position="1"/>
        <end position="211"/>
    </location>
</feature>
<feature type="active site" description="Nucleophile" evidence="1">
    <location>
        <position position="106"/>
    </location>
</feature>
<feature type="active site" evidence="1">
    <location>
        <position position="131"/>
    </location>
</feature>
<organism>
    <name type="scientific">Bradyrhizobium diazoefficiens (strain JCM 10833 / BCRC 13528 / IAM 13628 / NBRC 14792 / USDA 110)</name>
    <dbReference type="NCBI Taxonomy" id="224911"/>
    <lineage>
        <taxon>Bacteria</taxon>
        <taxon>Pseudomonadati</taxon>
        <taxon>Pseudomonadota</taxon>
        <taxon>Alphaproteobacteria</taxon>
        <taxon>Hyphomicrobiales</taxon>
        <taxon>Nitrobacteraceae</taxon>
        <taxon>Bradyrhizobium</taxon>
    </lineage>
</organism>
<dbReference type="EC" id="3.4.21.92" evidence="1"/>
<dbReference type="EMBL" id="BA000040">
    <property type="protein sequence ID" value="BAC50209.1"/>
    <property type="molecule type" value="Genomic_DNA"/>
</dbReference>
<dbReference type="RefSeq" id="NP_771584.1">
    <property type="nucleotide sequence ID" value="NC_004463.1"/>
</dbReference>
<dbReference type="RefSeq" id="WP_011087708.1">
    <property type="nucleotide sequence ID" value="NC_004463.1"/>
</dbReference>
<dbReference type="SMR" id="Q89KG1"/>
<dbReference type="FunCoup" id="Q89KG1">
    <property type="interactions" value="609"/>
</dbReference>
<dbReference type="STRING" id="224911.AAV28_22070"/>
<dbReference type="MEROPS" id="S14.001"/>
<dbReference type="EnsemblBacteria" id="BAC50209">
    <property type="protein sequence ID" value="BAC50209"/>
    <property type="gene ID" value="BAC50209"/>
</dbReference>
<dbReference type="GeneID" id="46491952"/>
<dbReference type="KEGG" id="bja:bll4944"/>
<dbReference type="PATRIC" id="fig|224911.44.peg.4798"/>
<dbReference type="eggNOG" id="COG0740">
    <property type="taxonomic scope" value="Bacteria"/>
</dbReference>
<dbReference type="HOGENOM" id="CLU_058707_3_2_5"/>
<dbReference type="InParanoid" id="Q89KG1"/>
<dbReference type="OrthoDB" id="9802800at2"/>
<dbReference type="PhylomeDB" id="Q89KG1"/>
<dbReference type="BRENDA" id="3.4.21.92">
    <property type="organism ID" value="929"/>
</dbReference>
<dbReference type="Proteomes" id="UP000002526">
    <property type="component" value="Chromosome"/>
</dbReference>
<dbReference type="GO" id="GO:0005737">
    <property type="term" value="C:cytoplasm"/>
    <property type="evidence" value="ECO:0007669"/>
    <property type="project" value="UniProtKB-SubCell"/>
</dbReference>
<dbReference type="GO" id="GO:0009368">
    <property type="term" value="C:endopeptidase Clp complex"/>
    <property type="evidence" value="ECO:0000318"/>
    <property type="project" value="GO_Central"/>
</dbReference>
<dbReference type="GO" id="GO:0004176">
    <property type="term" value="F:ATP-dependent peptidase activity"/>
    <property type="evidence" value="ECO:0000318"/>
    <property type="project" value="GO_Central"/>
</dbReference>
<dbReference type="GO" id="GO:0051117">
    <property type="term" value="F:ATPase binding"/>
    <property type="evidence" value="ECO:0000318"/>
    <property type="project" value="GO_Central"/>
</dbReference>
<dbReference type="GO" id="GO:0004252">
    <property type="term" value="F:serine-type endopeptidase activity"/>
    <property type="evidence" value="ECO:0000318"/>
    <property type="project" value="GO_Central"/>
</dbReference>
<dbReference type="GO" id="GO:0006515">
    <property type="term" value="P:protein quality control for misfolded or incompletely synthesized proteins"/>
    <property type="evidence" value="ECO:0000318"/>
    <property type="project" value="GO_Central"/>
</dbReference>
<dbReference type="CDD" id="cd07017">
    <property type="entry name" value="S14_ClpP_2"/>
    <property type="match status" value="1"/>
</dbReference>
<dbReference type="FunFam" id="3.90.226.10:FF:000001">
    <property type="entry name" value="ATP-dependent Clp protease proteolytic subunit"/>
    <property type="match status" value="1"/>
</dbReference>
<dbReference type="Gene3D" id="3.90.226.10">
    <property type="entry name" value="2-enoyl-CoA Hydratase, Chain A, domain 1"/>
    <property type="match status" value="1"/>
</dbReference>
<dbReference type="HAMAP" id="MF_00444">
    <property type="entry name" value="ClpP"/>
    <property type="match status" value="1"/>
</dbReference>
<dbReference type="InterPro" id="IPR001907">
    <property type="entry name" value="ClpP"/>
</dbReference>
<dbReference type="InterPro" id="IPR029045">
    <property type="entry name" value="ClpP/crotonase-like_dom_sf"/>
</dbReference>
<dbReference type="InterPro" id="IPR023562">
    <property type="entry name" value="ClpP/TepA"/>
</dbReference>
<dbReference type="InterPro" id="IPR033135">
    <property type="entry name" value="ClpP_His_AS"/>
</dbReference>
<dbReference type="NCBIfam" id="NF001368">
    <property type="entry name" value="PRK00277.1"/>
    <property type="match status" value="1"/>
</dbReference>
<dbReference type="NCBIfam" id="NF009205">
    <property type="entry name" value="PRK12553.1"/>
    <property type="match status" value="1"/>
</dbReference>
<dbReference type="PANTHER" id="PTHR10381">
    <property type="entry name" value="ATP-DEPENDENT CLP PROTEASE PROTEOLYTIC SUBUNIT"/>
    <property type="match status" value="1"/>
</dbReference>
<dbReference type="PANTHER" id="PTHR10381:SF70">
    <property type="entry name" value="ATP-DEPENDENT CLP PROTEASE PROTEOLYTIC SUBUNIT"/>
    <property type="match status" value="1"/>
</dbReference>
<dbReference type="Pfam" id="PF00574">
    <property type="entry name" value="CLP_protease"/>
    <property type="match status" value="1"/>
</dbReference>
<dbReference type="PRINTS" id="PR00127">
    <property type="entry name" value="CLPPROTEASEP"/>
</dbReference>
<dbReference type="SUPFAM" id="SSF52096">
    <property type="entry name" value="ClpP/crotonase"/>
    <property type="match status" value="1"/>
</dbReference>
<dbReference type="PROSITE" id="PS00382">
    <property type="entry name" value="CLP_PROTEASE_HIS"/>
    <property type="match status" value="1"/>
</dbReference>
<accession>Q89KG1</accession>
<sequence length="211" mass="23510">MRDPVETYMNLVPMVVEQTNRGERAYDIFSRLLKERIIFLTGPVEDGMSTLVVAQLLFLEAENPKKEISMYINSPGGVVTSGLAIYDTMQFIRPPVSTLCTGQAASMGSLLLAAGEKDMRFSLPNARIMVHQPSGGFQGQATDIMLHAQEILNLKKRLNEIYVKHTGQTYKTIEDALERDKFLTANDAKEFGLVDRVIDKRAEEPAAAKTQ</sequence>